<feature type="chain" id="PRO_0000339112" description="Coiled-coil domain-containing protein 34">
    <location>
        <begin position="1"/>
        <end position="367"/>
    </location>
</feature>
<feature type="region of interest" description="Disordered" evidence="3">
    <location>
        <begin position="77"/>
        <end position="105"/>
    </location>
</feature>
<feature type="region of interest" description="Disordered" evidence="3">
    <location>
        <begin position="191"/>
        <end position="228"/>
    </location>
</feature>
<feature type="region of interest" description="Disordered" evidence="3">
    <location>
        <begin position="310"/>
        <end position="349"/>
    </location>
</feature>
<feature type="coiled-coil region" evidence="2">
    <location>
        <begin position="87"/>
        <end position="108"/>
    </location>
</feature>
<feature type="coiled-coil region" evidence="2">
    <location>
        <begin position="153"/>
        <end position="280"/>
    </location>
</feature>
<feature type="compositionally biased region" description="Acidic residues" evidence="3">
    <location>
        <begin position="82"/>
        <end position="97"/>
    </location>
</feature>
<feature type="compositionally biased region" description="Basic and acidic residues" evidence="3">
    <location>
        <begin position="197"/>
        <end position="228"/>
    </location>
</feature>
<feature type="compositionally biased region" description="Low complexity" evidence="3">
    <location>
        <begin position="339"/>
        <end position="349"/>
    </location>
</feature>
<feature type="modified residue" description="Phosphoserine" evidence="1">
    <location>
        <position position="55"/>
    </location>
</feature>
<evidence type="ECO:0000250" key="1">
    <source>
        <dbReference type="UniProtKB" id="Q96HJ3"/>
    </source>
</evidence>
<evidence type="ECO:0000255" key="2"/>
<evidence type="ECO:0000256" key="3">
    <source>
        <dbReference type="SAM" id="MobiDB-lite"/>
    </source>
</evidence>
<evidence type="ECO:0000269" key="4">
    <source>
    </source>
</evidence>
<accession>Q3UI66</accession>
<accession>Q9CS29</accession>
<accession>Q9CS41</accession>
<dbReference type="EMBL" id="AK019172">
    <property type="protein sequence ID" value="BAB31586.1"/>
    <property type="molecule type" value="mRNA"/>
</dbReference>
<dbReference type="EMBL" id="AK019247">
    <property type="protein sequence ID" value="BAB31625.1"/>
    <property type="molecule type" value="mRNA"/>
</dbReference>
<dbReference type="EMBL" id="AK147056">
    <property type="protein sequence ID" value="BAE27640.1"/>
    <property type="molecule type" value="mRNA"/>
</dbReference>
<dbReference type="EMBL" id="AL928922">
    <property type="status" value="NOT_ANNOTATED_CDS"/>
    <property type="molecule type" value="Genomic_DNA"/>
</dbReference>
<dbReference type="CCDS" id="CCDS50655.1"/>
<dbReference type="RefSeq" id="NP_080889.3">
    <property type="nucleotide sequence ID" value="NM_026613.4"/>
</dbReference>
<dbReference type="SMR" id="Q3UI66"/>
<dbReference type="FunCoup" id="Q3UI66">
    <property type="interactions" value="112"/>
</dbReference>
<dbReference type="STRING" id="10090.ENSMUSP00000028580"/>
<dbReference type="PhosphoSitePlus" id="Q3UI66"/>
<dbReference type="PaxDb" id="10090-ENSMUSP00000028580"/>
<dbReference type="Antibodypedia" id="48802">
    <property type="antibodies" value="66 antibodies from 13 providers"/>
</dbReference>
<dbReference type="Ensembl" id="ENSMUST00000028580.12">
    <property type="protein sequence ID" value="ENSMUSP00000028580.6"/>
    <property type="gene ID" value="ENSMUSG00000027160.17"/>
</dbReference>
<dbReference type="GeneID" id="68201"/>
<dbReference type="KEGG" id="mmu:68201"/>
<dbReference type="UCSC" id="uc008lmr.2">
    <property type="organism name" value="mouse"/>
</dbReference>
<dbReference type="AGR" id="MGI:1915451"/>
<dbReference type="CTD" id="91057"/>
<dbReference type="MGI" id="MGI:1915451">
    <property type="gene designation" value="Ccdc34"/>
</dbReference>
<dbReference type="VEuPathDB" id="HostDB:ENSMUSG00000027160"/>
<dbReference type="eggNOG" id="ENOG502RRPQ">
    <property type="taxonomic scope" value="Eukaryota"/>
</dbReference>
<dbReference type="GeneTree" id="ENSGT00730000111271"/>
<dbReference type="HOGENOM" id="CLU_063061_0_0_1"/>
<dbReference type="InParanoid" id="Q3UI66"/>
<dbReference type="OMA" id="FTGDCRP"/>
<dbReference type="OrthoDB" id="5981665at2759"/>
<dbReference type="PhylomeDB" id="Q3UI66"/>
<dbReference type="TreeFam" id="TF333383"/>
<dbReference type="BioGRID-ORCS" id="68201">
    <property type="hits" value="1 hit in 77 CRISPR screens"/>
</dbReference>
<dbReference type="ChiTaRS" id="Ccdc34">
    <property type="organism name" value="mouse"/>
</dbReference>
<dbReference type="PRO" id="PR:Q3UI66"/>
<dbReference type="Proteomes" id="UP000000589">
    <property type="component" value="Chromosome 2"/>
</dbReference>
<dbReference type="RNAct" id="Q3UI66">
    <property type="molecule type" value="protein"/>
</dbReference>
<dbReference type="Bgee" id="ENSMUSG00000027160">
    <property type="expression patterns" value="Expressed in dorsal pancreas and 212 other cell types or tissues"/>
</dbReference>
<dbReference type="ExpressionAtlas" id="Q3UI66">
    <property type="expression patterns" value="baseline and differential"/>
</dbReference>
<dbReference type="GO" id="GO:0097225">
    <property type="term" value="C:sperm midpiece"/>
    <property type="evidence" value="ECO:0000314"/>
    <property type="project" value="UniProtKB"/>
</dbReference>
<dbReference type="GO" id="GO:0007283">
    <property type="term" value="P:spermatogenesis"/>
    <property type="evidence" value="ECO:0000315"/>
    <property type="project" value="UniProtKB"/>
</dbReference>
<dbReference type="InterPro" id="IPR045323">
    <property type="entry name" value="CCDC34"/>
</dbReference>
<dbReference type="InterPro" id="IPR025259">
    <property type="entry name" value="CCDC34/181"/>
</dbReference>
<dbReference type="PANTHER" id="PTHR23247:SF2">
    <property type="entry name" value="COILED-COIL DOMAIN-CONTAINING PROTEIN 34"/>
    <property type="match status" value="1"/>
</dbReference>
<dbReference type="PANTHER" id="PTHR23247">
    <property type="entry name" value="NY-REN-41 ANTIGEN L15 -RELATED"/>
    <property type="match status" value="1"/>
</dbReference>
<dbReference type="Pfam" id="PF13904">
    <property type="entry name" value="CCDC34"/>
    <property type="match status" value="1"/>
</dbReference>
<protein>
    <recommendedName>
        <fullName>Coiled-coil domain-containing protein 34</fullName>
    </recommendedName>
</protein>
<keyword id="KW-0966">Cell projection</keyword>
<keyword id="KW-0969">Cilium</keyword>
<keyword id="KW-0175">Coiled coil</keyword>
<keyword id="KW-0282">Flagellum</keyword>
<keyword id="KW-0597">Phosphoprotein</keyword>
<keyword id="KW-1185">Reference proteome</keyword>
<reference key="1">
    <citation type="journal article" date="2005" name="Science">
        <title>The transcriptional landscape of the mammalian genome.</title>
        <authorList>
            <person name="Carninci P."/>
            <person name="Kasukawa T."/>
            <person name="Katayama S."/>
            <person name="Gough J."/>
            <person name="Frith M.C."/>
            <person name="Maeda N."/>
            <person name="Oyama R."/>
            <person name="Ravasi T."/>
            <person name="Lenhard B."/>
            <person name="Wells C."/>
            <person name="Kodzius R."/>
            <person name="Shimokawa K."/>
            <person name="Bajic V.B."/>
            <person name="Brenner S.E."/>
            <person name="Batalov S."/>
            <person name="Forrest A.R."/>
            <person name="Zavolan M."/>
            <person name="Davis M.J."/>
            <person name="Wilming L.G."/>
            <person name="Aidinis V."/>
            <person name="Allen J.E."/>
            <person name="Ambesi-Impiombato A."/>
            <person name="Apweiler R."/>
            <person name="Aturaliya R.N."/>
            <person name="Bailey T.L."/>
            <person name="Bansal M."/>
            <person name="Baxter L."/>
            <person name="Beisel K.W."/>
            <person name="Bersano T."/>
            <person name="Bono H."/>
            <person name="Chalk A.M."/>
            <person name="Chiu K.P."/>
            <person name="Choudhary V."/>
            <person name="Christoffels A."/>
            <person name="Clutterbuck D.R."/>
            <person name="Crowe M.L."/>
            <person name="Dalla E."/>
            <person name="Dalrymple B.P."/>
            <person name="de Bono B."/>
            <person name="Della Gatta G."/>
            <person name="di Bernardo D."/>
            <person name="Down T."/>
            <person name="Engstrom P."/>
            <person name="Fagiolini M."/>
            <person name="Faulkner G."/>
            <person name="Fletcher C.F."/>
            <person name="Fukushima T."/>
            <person name="Furuno M."/>
            <person name="Futaki S."/>
            <person name="Gariboldi M."/>
            <person name="Georgii-Hemming P."/>
            <person name="Gingeras T.R."/>
            <person name="Gojobori T."/>
            <person name="Green R.E."/>
            <person name="Gustincich S."/>
            <person name="Harbers M."/>
            <person name="Hayashi Y."/>
            <person name="Hensch T.K."/>
            <person name="Hirokawa N."/>
            <person name="Hill D."/>
            <person name="Huminiecki L."/>
            <person name="Iacono M."/>
            <person name="Ikeo K."/>
            <person name="Iwama A."/>
            <person name="Ishikawa T."/>
            <person name="Jakt M."/>
            <person name="Kanapin A."/>
            <person name="Katoh M."/>
            <person name="Kawasawa Y."/>
            <person name="Kelso J."/>
            <person name="Kitamura H."/>
            <person name="Kitano H."/>
            <person name="Kollias G."/>
            <person name="Krishnan S.P."/>
            <person name="Kruger A."/>
            <person name="Kummerfeld S.K."/>
            <person name="Kurochkin I.V."/>
            <person name="Lareau L.F."/>
            <person name="Lazarevic D."/>
            <person name="Lipovich L."/>
            <person name="Liu J."/>
            <person name="Liuni S."/>
            <person name="McWilliam S."/>
            <person name="Madan Babu M."/>
            <person name="Madera M."/>
            <person name="Marchionni L."/>
            <person name="Matsuda H."/>
            <person name="Matsuzawa S."/>
            <person name="Miki H."/>
            <person name="Mignone F."/>
            <person name="Miyake S."/>
            <person name="Morris K."/>
            <person name="Mottagui-Tabar S."/>
            <person name="Mulder N."/>
            <person name="Nakano N."/>
            <person name="Nakauchi H."/>
            <person name="Ng P."/>
            <person name="Nilsson R."/>
            <person name="Nishiguchi S."/>
            <person name="Nishikawa S."/>
            <person name="Nori F."/>
            <person name="Ohara O."/>
            <person name="Okazaki Y."/>
            <person name="Orlando V."/>
            <person name="Pang K.C."/>
            <person name="Pavan W.J."/>
            <person name="Pavesi G."/>
            <person name="Pesole G."/>
            <person name="Petrovsky N."/>
            <person name="Piazza S."/>
            <person name="Reed J."/>
            <person name="Reid J.F."/>
            <person name="Ring B.Z."/>
            <person name="Ringwald M."/>
            <person name="Rost B."/>
            <person name="Ruan Y."/>
            <person name="Salzberg S.L."/>
            <person name="Sandelin A."/>
            <person name="Schneider C."/>
            <person name="Schoenbach C."/>
            <person name="Sekiguchi K."/>
            <person name="Semple C.A."/>
            <person name="Seno S."/>
            <person name="Sessa L."/>
            <person name="Sheng Y."/>
            <person name="Shibata Y."/>
            <person name="Shimada H."/>
            <person name="Shimada K."/>
            <person name="Silva D."/>
            <person name="Sinclair B."/>
            <person name="Sperling S."/>
            <person name="Stupka E."/>
            <person name="Sugiura K."/>
            <person name="Sultana R."/>
            <person name="Takenaka Y."/>
            <person name="Taki K."/>
            <person name="Tammoja K."/>
            <person name="Tan S.L."/>
            <person name="Tang S."/>
            <person name="Taylor M.S."/>
            <person name="Tegner J."/>
            <person name="Teichmann S.A."/>
            <person name="Ueda H.R."/>
            <person name="van Nimwegen E."/>
            <person name="Verardo R."/>
            <person name="Wei C.L."/>
            <person name="Yagi K."/>
            <person name="Yamanishi H."/>
            <person name="Zabarovsky E."/>
            <person name="Zhu S."/>
            <person name="Zimmer A."/>
            <person name="Hide W."/>
            <person name="Bult C."/>
            <person name="Grimmond S.M."/>
            <person name="Teasdale R.D."/>
            <person name="Liu E.T."/>
            <person name="Brusic V."/>
            <person name="Quackenbush J."/>
            <person name="Wahlestedt C."/>
            <person name="Mattick J.S."/>
            <person name="Hume D.A."/>
            <person name="Kai C."/>
            <person name="Sasaki D."/>
            <person name="Tomaru Y."/>
            <person name="Fukuda S."/>
            <person name="Kanamori-Katayama M."/>
            <person name="Suzuki M."/>
            <person name="Aoki J."/>
            <person name="Arakawa T."/>
            <person name="Iida J."/>
            <person name="Imamura K."/>
            <person name="Itoh M."/>
            <person name="Kato T."/>
            <person name="Kawaji H."/>
            <person name="Kawagashira N."/>
            <person name="Kawashima T."/>
            <person name="Kojima M."/>
            <person name="Kondo S."/>
            <person name="Konno H."/>
            <person name="Nakano K."/>
            <person name="Ninomiya N."/>
            <person name="Nishio T."/>
            <person name="Okada M."/>
            <person name="Plessy C."/>
            <person name="Shibata K."/>
            <person name="Shiraki T."/>
            <person name="Suzuki S."/>
            <person name="Tagami M."/>
            <person name="Waki K."/>
            <person name="Watahiki A."/>
            <person name="Okamura-Oho Y."/>
            <person name="Suzuki H."/>
            <person name="Kawai J."/>
            <person name="Hayashizaki Y."/>
        </authorList>
    </citation>
    <scope>NUCLEOTIDE SEQUENCE [LARGE SCALE MRNA]</scope>
    <source>
        <strain>C57BL/6J</strain>
        <tissue>Amnion</tissue>
        <tissue>Embryo</tissue>
    </source>
</reference>
<reference key="2">
    <citation type="journal article" date="2009" name="PLoS Biol.">
        <title>Lineage-specific biology revealed by a finished genome assembly of the mouse.</title>
        <authorList>
            <person name="Church D.M."/>
            <person name="Goodstadt L."/>
            <person name="Hillier L.W."/>
            <person name="Zody M.C."/>
            <person name="Goldstein S."/>
            <person name="She X."/>
            <person name="Bult C.J."/>
            <person name="Agarwala R."/>
            <person name="Cherry J.L."/>
            <person name="DiCuccio M."/>
            <person name="Hlavina W."/>
            <person name="Kapustin Y."/>
            <person name="Meric P."/>
            <person name="Maglott D."/>
            <person name="Birtle Z."/>
            <person name="Marques A.C."/>
            <person name="Graves T."/>
            <person name="Zhou S."/>
            <person name="Teague B."/>
            <person name="Potamousis K."/>
            <person name="Churas C."/>
            <person name="Place M."/>
            <person name="Herschleb J."/>
            <person name="Runnheim R."/>
            <person name="Forrest D."/>
            <person name="Amos-Landgraf J."/>
            <person name="Schwartz D.C."/>
            <person name="Cheng Z."/>
            <person name="Lindblad-Toh K."/>
            <person name="Eichler E.E."/>
            <person name="Ponting C.P."/>
        </authorList>
    </citation>
    <scope>NUCLEOTIDE SEQUENCE [LARGE SCALE GENOMIC DNA]</scope>
    <source>
        <strain>C57BL/6J</strain>
    </source>
</reference>
<reference key="3">
    <citation type="journal article" date="2022" name="J. Med. Genet.">
        <title>Homozygous mutations in CCDC34 cause male infertility with oligoasthenoteratozoospermia in humans and mice.</title>
        <authorList>
            <person name="Cong J."/>
            <person name="Wang X."/>
            <person name="Amiri-Yekta A."/>
            <person name="Wang L."/>
            <person name="Kherraf Z.E."/>
            <person name="Liu C."/>
            <person name="Cazin C."/>
            <person name="Tang S."/>
            <person name="Hosseini S.H."/>
            <person name="Tian S."/>
            <person name="Daneshipour A."/>
            <person name="Wang J."/>
            <person name="Zhou Y."/>
            <person name="Zeng Y."/>
            <person name="Yang S."/>
            <person name="He X."/>
            <person name="Li J."/>
            <person name="Cao Y."/>
            <person name="Jin L."/>
            <person name="Ray P.F."/>
            <person name="Zhang F."/>
        </authorList>
    </citation>
    <scope>FUNCTION</scope>
    <scope>SUBCELLULAR LOCATION</scope>
    <scope>TISSUE SPECIFICITY</scope>
</reference>
<sequence length="367" mass="42216">MRAAGPWRAASPAPCTRYLARCKPGFRPSSSFVVDLLVDSGDPGLEDVALTECLSPPSLSCSNSTLSLLSPLGHQSFPFGADDSEGEDEEALDEDARESESKVESLEGIEFQQRSSCEVESQDKQEKLVLLQHGSLTPWEMWFVGKEKEERGRLQQKFLEELNQQIEKRKEMEEREKRKIIAEVKHKEWVQKKNKQERKEREQKINKEMEEKEAKKREKEHLQEKAKEKYQEWLKKKKAEEYEKKKKEKEKEKQRQAELQEKKEIAEKKFKEWLENAKNKPRPAAKSYGYSSGKLTGFYSGNSYPEPTFYNPIPWKPIHMPPPKEAKSGPGKKSKRHAASQPLPSSSLAVHNAKSSLCLGALCRGQR</sequence>
<organism>
    <name type="scientific">Mus musculus</name>
    <name type="common">Mouse</name>
    <dbReference type="NCBI Taxonomy" id="10090"/>
    <lineage>
        <taxon>Eukaryota</taxon>
        <taxon>Metazoa</taxon>
        <taxon>Chordata</taxon>
        <taxon>Craniata</taxon>
        <taxon>Vertebrata</taxon>
        <taxon>Euteleostomi</taxon>
        <taxon>Mammalia</taxon>
        <taxon>Eutheria</taxon>
        <taxon>Euarchontoglires</taxon>
        <taxon>Glires</taxon>
        <taxon>Rodentia</taxon>
        <taxon>Myomorpha</taxon>
        <taxon>Muroidea</taxon>
        <taxon>Muridae</taxon>
        <taxon>Murinae</taxon>
        <taxon>Mus</taxon>
        <taxon>Mus</taxon>
    </lineage>
</organism>
<comment type="function">
    <text evidence="4">Involved in spermatogenesis. Has a probable role in anterograde intraflagellar transport which is essential for the formation of sperm flagella.</text>
</comment>
<comment type="subcellular location">
    <subcellularLocation>
        <location evidence="4">Cell projection</location>
        <location evidence="4">Cilium</location>
        <location evidence="4">Flagellum</location>
    </subcellularLocation>
    <text evidence="4">Mainly located in the mid-piece of sperm flagella.</text>
</comment>
<comment type="tissue specificity">
    <text evidence="4">Expressed in testis and sperm.</text>
</comment>
<gene>
    <name type="primary">Ccdc34</name>
</gene>
<proteinExistence type="evidence at transcript level"/>
<name>CCD34_MOUSE</name>